<sequence length="150" mass="17277">MSLKNKFKNFFSLDDEEYEYEYIETDREEIPEEHESKDRTAYQSKAAGKQNVVSLQSVQKSSKVVLSEPRVYAEAQEIADHIKNRRAVVVNLQRIQHDQAKRIVDFLSGTVYALGGDIQRIGADIFLCTPENVDVSGTISELIEEEHQRW</sequence>
<accession>Q65JW1</accession>
<accession>Q62VB5</accession>
<keyword id="KW-0131">Cell cycle</keyword>
<keyword id="KW-0132">Cell division</keyword>
<keyword id="KW-0963">Cytoplasm</keyword>
<keyword id="KW-1185">Reference proteome</keyword>
<keyword id="KW-0717">Septation</keyword>
<protein>
    <recommendedName>
        <fullName evidence="1">Cell division protein SepF</fullName>
    </recommendedName>
</protein>
<feature type="chain" id="PRO_0000333982" description="Cell division protein SepF">
    <location>
        <begin position="1"/>
        <end position="150"/>
    </location>
</feature>
<feature type="region of interest" description="Disordered" evidence="2">
    <location>
        <begin position="26"/>
        <end position="45"/>
    </location>
</feature>
<gene>
    <name evidence="1" type="primary">sepF</name>
    <name type="ordered locus">BLi01758</name>
    <name type="ordered locus">BL02262</name>
</gene>
<name>SEPF_BACLD</name>
<dbReference type="EMBL" id="CP000002">
    <property type="protein sequence ID" value="AAU23294.1"/>
    <property type="molecule type" value="Genomic_DNA"/>
</dbReference>
<dbReference type="EMBL" id="AE017333">
    <property type="protein sequence ID" value="AAU40653.1"/>
    <property type="molecule type" value="Genomic_DNA"/>
</dbReference>
<dbReference type="RefSeq" id="WP_003181594.1">
    <property type="nucleotide sequence ID" value="NC_006322.1"/>
</dbReference>
<dbReference type="SMR" id="Q65JW1"/>
<dbReference type="STRING" id="279010.BL02262"/>
<dbReference type="GeneID" id="92861648"/>
<dbReference type="KEGG" id="bld:BLi01758"/>
<dbReference type="KEGG" id="bli:BL02262"/>
<dbReference type="eggNOG" id="COG1799">
    <property type="taxonomic scope" value="Bacteria"/>
</dbReference>
<dbReference type="HOGENOM" id="CLU_078499_4_1_9"/>
<dbReference type="Proteomes" id="UP000000606">
    <property type="component" value="Chromosome"/>
</dbReference>
<dbReference type="GO" id="GO:0005737">
    <property type="term" value="C:cytoplasm"/>
    <property type="evidence" value="ECO:0007669"/>
    <property type="project" value="UniProtKB-SubCell"/>
</dbReference>
<dbReference type="GO" id="GO:0000917">
    <property type="term" value="P:division septum assembly"/>
    <property type="evidence" value="ECO:0007669"/>
    <property type="project" value="UniProtKB-KW"/>
</dbReference>
<dbReference type="GO" id="GO:0043093">
    <property type="term" value="P:FtsZ-dependent cytokinesis"/>
    <property type="evidence" value="ECO:0007669"/>
    <property type="project" value="UniProtKB-UniRule"/>
</dbReference>
<dbReference type="Gene3D" id="3.30.110.150">
    <property type="entry name" value="SepF-like protein"/>
    <property type="match status" value="1"/>
</dbReference>
<dbReference type="HAMAP" id="MF_01197">
    <property type="entry name" value="SepF"/>
    <property type="match status" value="1"/>
</dbReference>
<dbReference type="InterPro" id="IPR023052">
    <property type="entry name" value="Cell_div_SepF"/>
</dbReference>
<dbReference type="InterPro" id="IPR007561">
    <property type="entry name" value="Cell_div_SepF/SepF-rel"/>
</dbReference>
<dbReference type="InterPro" id="IPR038594">
    <property type="entry name" value="SepF-like_sf"/>
</dbReference>
<dbReference type="PANTHER" id="PTHR35798">
    <property type="entry name" value="CELL DIVISION PROTEIN SEPF"/>
    <property type="match status" value="1"/>
</dbReference>
<dbReference type="PANTHER" id="PTHR35798:SF1">
    <property type="entry name" value="CELL DIVISION PROTEIN SEPF"/>
    <property type="match status" value="1"/>
</dbReference>
<dbReference type="Pfam" id="PF04472">
    <property type="entry name" value="SepF"/>
    <property type="match status" value="1"/>
</dbReference>
<reference key="1">
    <citation type="journal article" date="2004" name="J. Mol. Microbiol. Biotechnol.">
        <title>The complete genome sequence of Bacillus licheniformis DSM13, an organism with great industrial potential.</title>
        <authorList>
            <person name="Veith B."/>
            <person name="Herzberg C."/>
            <person name="Steckel S."/>
            <person name="Feesche J."/>
            <person name="Maurer K.H."/>
            <person name="Ehrenreich P."/>
            <person name="Baeumer S."/>
            <person name="Henne A."/>
            <person name="Liesegang H."/>
            <person name="Merkl R."/>
            <person name="Ehrenreich A."/>
            <person name="Gottschalk G."/>
        </authorList>
    </citation>
    <scope>NUCLEOTIDE SEQUENCE [LARGE SCALE GENOMIC DNA]</scope>
    <source>
        <strain>ATCC 14580 / DSM 13 / JCM 2505 / CCUG 7422 / NBRC 12200 / NCIMB 9375 / NCTC 10341 / NRRL NRS-1264 / Gibson 46</strain>
    </source>
</reference>
<reference key="2">
    <citation type="journal article" date="2004" name="Genome Biol.">
        <title>Complete genome sequence of the industrial bacterium Bacillus licheniformis and comparisons with closely related Bacillus species.</title>
        <authorList>
            <person name="Rey M.W."/>
            <person name="Ramaiya P."/>
            <person name="Nelson B.A."/>
            <person name="Brody-Karpin S.D."/>
            <person name="Zaretsky E.J."/>
            <person name="Tang M."/>
            <person name="Lopez de Leon A."/>
            <person name="Xiang H."/>
            <person name="Gusti V."/>
            <person name="Clausen I.G."/>
            <person name="Olsen P.B."/>
            <person name="Rasmussen M.D."/>
            <person name="Andersen J.T."/>
            <person name="Joergensen P.L."/>
            <person name="Larsen T.S."/>
            <person name="Sorokin A."/>
            <person name="Bolotin A."/>
            <person name="Lapidus A."/>
            <person name="Galleron N."/>
            <person name="Ehrlich S.D."/>
            <person name="Berka R.M."/>
        </authorList>
    </citation>
    <scope>NUCLEOTIDE SEQUENCE [LARGE SCALE GENOMIC DNA]</scope>
    <source>
        <strain>ATCC 14580 / DSM 13 / JCM 2505 / CCUG 7422 / NBRC 12200 / NCIMB 9375 / NCTC 10341 / NRRL NRS-1264 / Gibson 46</strain>
    </source>
</reference>
<organism>
    <name type="scientific">Bacillus licheniformis (strain ATCC 14580 / DSM 13 / JCM 2505 / CCUG 7422 / NBRC 12200 / NCIMB 9375 / NCTC 10341 / NRRL NRS-1264 / Gibson 46)</name>
    <dbReference type="NCBI Taxonomy" id="279010"/>
    <lineage>
        <taxon>Bacteria</taxon>
        <taxon>Bacillati</taxon>
        <taxon>Bacillota</taxon>
        <taxon>Bacilli</taxon>
        <taxon>Bacillales</taxon>
        <taxon>Bacillaceae</taxon>
        <taxon>Bacillus</taxon>
    </lineage>
</organism>
<evidence type="ECO:0000255" key="1">
    <source>
        <dbReference type="HAMAP-Rule" id="MF_01197"/>
    </source>
</evidence>
<evidence type="ECO:0000256" key="2">
    <source>
        <dbReference type="SAM" id="MobiDB-lite"/>
    </source>
</evidence>
<comment type="function">
    <text evidence="1">Cell division protein that is part of the divisome complex and is recruited early to the Z-ring. Probably stimulates Z-ring formation, perhaps through the cross-linking of FtsZ protofilaments. Its function overlaps with FtsA.</text>
</comment>
<comment type="subunit">
    <text evidence="1">Homodimer. Interacts with FtsZ.</text>
</comment>
<comment type="subcellular location">
    <subcellularLocation>
        <location evidence="1">Cytoplasm</location>
    </subcellularLocation>
    <text evidence="1">Localizes to the division site, in a FtsZ-dependent manner.</text>
</comment>
<comment type="similarity">
    <text evidence="1">Belongs to the SepF family.</text>
</comment>
<proteinExistence type="inferred from homology"/>